<proteinExistence type="evidence at transcript level"/>
<evidence type="ECO:0000305" key="1"/>
<sequence>MARGLKKHLKRLNAPRHWMLDKLGGAFAPKPSSGPHKSRECLPLILILRNRLKYALTYREVIAILMQRHVMVDGKVRTDKTYPAGFMDVVSIPKTNEDFRLLYDTKGRFCLHAITGDETKFKLCKVRSVQFGQKGIPYLNTYDGRTIRYPDPLIKANDTIKLDLESNKIVDFIKFDVGNVVMVTGGRNRGRVGVIKNREKHKGSFETIHVQDAAGHEFATRLGNVFTIGKGTKPWVSLPKRKGIKLSIIEEARKRLAAQNAA</sequence>
<feature type="chain" id="PRO_0000130833" description="Small ribosomal subunit protein eS4">
    <location>
        <begin position="1"/>
        <end position="262"/>
    </location>
</feature>
<feature type="domain" description="S4 RNA-binding">
    <location>
        <begin position="42"/>
        <end position="104"/>
    </location>
</feature>
<protein>
    <recommendedName>
        <fullName evidence="1">Small ribosomal subunit protein eS4</fullName>
    </recommendedName>
    <alternativeName>
        <fullName>40S ribosomal protein S4</fullName>
    </alternativeName>
</protein>
<gene>
    <name type="primary">RPS4</name>
</gene>
<keyword id="KW-0963">Cytoplasm</keyword>
<keyword id="KW-1185">Reference proteome</keyword>
<keyword id="KW-0687">Ribonucleoprotein</keyword>
<keyword id="KW-0689">Ribosomal protein</keyword>
<keyword id="KW-0694">RNA-binding</keyword>
<keyword id="KW-0699">rRNA-binding</keyword>
<accession>P46299</accession>
<name>RS4_GOSHI</name>
<comment type="subcellular location">
    <subcellularLocation>
        <location>Cytoplasm</location>
    </subcellularLocation>
</comment>
<comment type="similarity">
    <text evidence="1">Belongs to the eukaryotic ribosomal protein eS4 family.</text>
</comment>
<reference key="1">
    <citation type="journal article" date="1995" name="Plant Physiol.">
        <title>A cDNA encoding ribosomal protein S4e from cotton (Gossypium hirsutum L.).</title>
        <authorList>
            <person name="Turley R.B."/>
            <person name="Ferguson D.L."/>
            <person name="Meredith W.R."/>
        </authorList>
    </citation>
    <scope>NUCLEOTIDE SEQUENCE [MRNA]</scope>
    <source>
        <strain>cv. Deltapine 62</strain>
    </source>
</reference>
<dbReference type="EMBL" id="X79300">
    <property type="protein sequence ID" value="CAA55882.1"/>
    <property type="molecule type" value="mRNA"/>
</dbReference>
<dbReference type="PIR" id="S45026">
    <property type="entry name" value="S45026"/>
</dbReference>
<dbReference type="RefSeq" id="NP_001314351.1">
    <property type="nucleotide sequence ID" value="NM_001327422.1"/>
</dbReference>
<dbReference type="SMR" id="P46299"/>
<dbReference type="STRING" id="3635.P46299"/>
<dbReference type="PaxDb" id="3635-P46299"/>
<dbReference type="GeneID" id="107938968"/>
<dbReference type="KEGG" id="ghi:107938968"/>
<dbReference type="OrthoDB" id="39561at41938"/>
<dbReference type="Proteomes" id="UP000189702">
    <property type="component" value="Unplaced"/>
</dbReference>
<dbReference type="GO" id="GO:0022627">
    <property type="term" value="C:cytosolic small ribosomal subunit"/>
    <property type="evidence" value="ECO:0000318"/>
    <property type="project" value="GO_Central"/>
</dbReference>
<dbReference type="GO" id="GO:0005634">
    <property type="term" value="C:nucleus"/>
    <property type="evidence" value="ECO:0000304"/>
    <property type="project" value="AgBase"/>
</dbReference>
<dbReference type="GO" id="GO:0044391">
    <property type="term" value="C:ribosomal subunit"/>
    <property type="evidence" value="ECO:0000304"/>
    <property type="project" value="AgBase"/>
</dbReference>
<dbReference type="GO" id="GO:0003729">
    <property type="term" value="F:mRNA binding"/>
    <property type="evidence" value="ECO:0000304"/>
    <property type="project" value="AgBase"/>
</dbReference>
<dbReference type="GO" id="GO:0003723">
    <property type="term" value="F:RNA binding"/>
    <property type="evidence" value="ECO:0000318"/>
    <property type="project" value="GO_Central"/>
</dbReference>
<dbReference type="GO" id="GO:0019843">
    <property type="term" value="F:rRNA binding"/>
    <property type="evidence" value="ECO:0007669"/>
    <property type="project" value="UniProtKB-KW"/>
</dbReference>
<dbReference type="GO" id="GO:0003735">
    <property type="term" value="F:structural constituent of ribosome"/>
    <property type="evidence" value="ECO:0000318"/>
    <property type="project" value="GO_Central"/>
</dbReference>
<dbReference type="GO" id="GO:0031369">
    <property type="term" value="F:translation initiation factor binding"/>
    <property type="evidence" value="ECO:0000304"/>
    <property type="project" value="AgBase"/>
</dbReference>
<dbReference type="GO" id="GO:0006412">
    <property type="term" value="P:translation"/>
    <property type="evidence" value="ECO:0000318"/>
    <property type="project" value="GO_Central"/>
</dbReference>
<dbReference type="CDD" id="cd06087">
    <property type="entry name" value="KOW_RPS4"/>
    <property type="match status" value="1"/>
</dbReference>
<dbReference type="CDD" id="cd00165">
    <property type="entry name" value="S4"/>
    <property type="match status" value="1"/>
</dbReference>
<dbReference type="FunFam" id="2.30.30.30:FF:000005">
    <property type="entry name" value="40S ribosomal protein S4"/>
    <property type="match status" value="1"/>
</dbReference>
<dbReference type="FunFam" id="2.40.50.740:FF:000001">
    <property type="entry name" value="40S ribosomal protein S4"/>
    <property type="match status" value="1"/>
</dbReference>
<dbReference type="FunFam" id="3.10.290.10:FF:000002">
    <property type="entry name" value="40S ribosomal protein S4"/>
    <property type="match status" value="1"/>
</dbReference>
<dbReference type="Gene3D" id="2.30.30.30">
    <property type="match status" value="1"/>
</dbReference>
<dbReference type="Gene3D" id="2.40.50.740">
    <property type="match status" value="1"/>
</dbReference>
<dbReference type="Gene3D" id="3.10.290.10">
    <property type="entry name" value="RNA-binding S4 domain"/>
    <property type="match status" value="1"/>
</dbReference>
<dbReference type="HAMAP" id="MF_00485">
    <property type="entry name" value="Ribosomal_eS4"/>
    <property type="match status" value="1"/>
</dbReference>
<dbReference type="InterPro" id="IPR005824">
    <property type="entry name" value="KOW"/>
</dbReference>
<dbReference type="InterPro" id="IPR014722">
    <property type="entry name" value="Rib_uL2_dom2"/>
</dbReference>
<dbReference type="InterPro" id="IPR000876">
    <property type="entry name" value="Ribosomal_eS4"/>
</dbReference>
<dbReference type="InterPro" id="IPR032277">
    <property type="entry name" value="Ribosomal_eS4_C"/>
</dbReference>
<dbReference type="InterPro" id="IPR013845">
    <property type="entry name" value="Ribosomal_eS4_central_region"/>
</dbReference>
<dbReference type="InterPro" id="IPR038237">
    <property type="entry name" value="Ribosomal_eS4_central_sf"/>
</dbReference>
<dbReference type="InterPro" id="IPR041982">
    <property type="entry name" value="Ribosomal_eS4_KOW"/>
</dbReference>
<dbReference type="InterPro" id="IPR013843">
    <property type="entry name" value="Ribosomal_eS4_N"/>
</dbReference>
<dbReference type="InterPro" id="IPR018199">
    <property type="entry name" value="Ribosomal_eS4_N_CS"/>
</dbReference>
<dbReference type="InterPro" id="IPR002942">
    <property type="entry name" value="S4_RNA-bd"/>
</dbReference>
<dbReference type="InterPro" id="IPR036986">
    <property type="entry name" value="S4_RNA-bd_sf"/>
</dbReference>
<dbReference type="PANTHER" id="PTHR11581">
    <property type="entry name" value="30S/40S RIBOSOMAL PROTEIN S4"/>
    <property type="match status" value="1"/>
</dbReference>
<dbReference type="PANTHER" id="PTHR11581:SF0">
    <property type="entry name" value="SMALL RIBOSOMAL SUBUNIT PROTEIN ES4"/>
    <property type="match status" value="1"/>
</dbReference>
<dbReference type="Pfam" id="PF16121">
    <property type="entry name" value="40S_S4_C"/>
    <property type="match status" value="1"/>
</dbReference>
<dbReference type="Pfam" id="PF00467">
    <property type="entry name" value="KOW"/>
    <property type="match status" value="1"/>
</dbReference>
<dbReference type="Pfam" id="PF00900">
    <property type="entry name" value="Ribosomal_S4e"/>
    <property type="match status" value="1"/>
</dbReference>
<dbReference type="Pfam" id="PF08071">
    <property type="entry name" value="RS4NT"/>
    <property type="match status" value="1"/>
</dbReference>
<dbReference type="Pfam" id="PF01479">
    <property type="entry name" value="S4"/>
    <property type="match status" value="1"/>
</dbReference>
<dbReference type="PIRSF" id="PIRSF002116">
    <property type="entry name" value="Ribosomal_S4"/>
    <property type="match status" value="1"/>
</dbReference>
<dbReference type="SMART" id="SM00739">
    <property type="entry name" value="KOW"/>
    <property type="match status" value="1"/>
</dbReference>
<dbReference type="SMART" id="SM00363">
    <property type="entry name" value="S4"/>
    <property type="match status" value="1"/>
</dbReference>
<dbReference type="PROSITE" id="PS00528">
    <property type="entry name" value="RIBOSOMAL_S4E"/>
    <property type="match status" value="1"/>
</dbReference>
<dbReference type="PROSITE" id="PS50889">
    <property type="entry name" value="S4"/>
    <property type="match status" value="1"/>
</dbReference>
<organism>
    <name type="scientific">Gossypium hirsutum</name>
    <name type="common">Upland cotton</name>
    <name type="synonym">Gossypium mexicanum</name>
    <dbReference type="NCBI Taxonomy" id="3635"/>
    <lineage>
        <taxon>Eukaryota</taxon>
        <taxon>Viridiplantae</taxon>
        <taxon>Streptophyta</taxon>
        <taxon>Embryophyta</taxon>
        <taxon>Tracheophyta</taxon>
        <taxon>Spermatophyta</taxon>
        <taxon>Magnoliopsida</taxon>
        <taxon>eudicotyledons</taxon>
        <taxon>Gunneridae</taxon>
        <taxon>Pentapetalae</taxon>
        <taxon>rosids</taxon>
        <taxon>malvids</taxon>
        <taxon>Malvales</taxon>
        <taxon>Malvaceae</taxon>
        <taxon>Malvoideae</taxon>
        <taxon>Gossypium</taxon>
    </lineage>
</organism>